<keyword id="KW-0025">Alternative splicing</keyword>
<keyword id="KW-1003">Cell membrane</keyword>
<keyword id="KW-1015">Disulfide bond</keyword>
<keyword id="KW-0297">G-protein coupled receptor</keyword>
<keyword id="KW-0325">Glycoprotein</keyword>
<keyword id="KW-0449">Lipoprotein</keyword>
<keyword id="KW-0472">Membrane</keyword>
<keyword id="KW-0564">Palmitate</keyword>
<keyword id="KW-0597">Phosphoprotein</keyword>
<keyword id="KW-0675">Receptor</keyword>
<keyword id="KW-1185">Reference proteome</keyword>
<keyword id="KW-0807">Transducer</keyword>
<keyword id="KW-0812">Transmembrane</keyword>
<keyword id="KW-1133">Transmembrane helix</keyword>
<accession>P28647</accession>
<accession>Q63792</accession>
<sequence length="320" mass="36629">MKANNTTTSALWLQITYITMEAAIGLCAVVGNMLVIWVVKLNRTLRTTTFYFIVSLALADIAVGVLVIPLAIAVSLEVQMHFYACLFMSCVLLVFTHASIMSLLAIAVDRYLRVKLTVRYRTVTTQRRIWLFLGLCWLVSFLVGLTPMFGWNRKVTLELSQNSSTLSCHFRSVVGLDYMVFFSFITWILIPLVVMCIIYLDIFYIIRNKLSQNLTGFRETRAFYGREFKTAKSLFLVLFLFALCWLPLSIINFVSYFNVKIPEIAMCLGILLSHANSMMNPIVYACKIKKFKETYFVILRACRLCQTSDSLDSNLEQTTE</sequence>
<protein>
    <recommendedName>
        <fullName>Adenosine receptor A3</fullName>
    </recommendedName>
    <alternativeName>
        <fullName>TGPCR1</fullName>
    </alternativeName>
</protein>
<name>AA3R_RAT</name>
<comment type="function">
    <text evidence="6 8">Receptor for adenosine. The activity of this receptor is mediated by G proteins which inhibits adenylyl cyclase (PubMed:1323836). May play a role during reproduction (PubMed:1647979).</text>
</comment>
<comment type="subcellular location">
    <subcellularLocation>
        <location evidence="2">Cell membrane</location>
        <topology evidence="3">Multi-pass membrane protein</topology>
    </subcellularLocation>
</comment>
<comment type="alternative products">
    <event type="alternative splicing"/>
    <isoform>
        <id>P28647-1</id>
        <name>A</name>
        <sequence type="displayed"/>
    </isoform>
    <isoform>
        <id>P28647-2</id>
        <name>B</name>
        <name>A3i</name>
        <sequence type="described" ref="VSP_001859"/>
    </isoform>
</comment>
<comment type="tissue specificity">
    <text evidence="7">Testis, particularly in spermatocytes and spermatids but not in spermatogonia. Low levels in the brain.</text>
</comment>
<comment type="developmental stage">
    <text evidence="7">Expressed during spermiogenesis.</text>
</comment>
<comment type="PTM">
    <text evidence="5">Phosphorylation on Thr-318 and Thr-319 may be crucial for rapid desensitization. Phosphorylation on Thr-318 may be necessary for phosphorylation on Thr-319 to occur.</text>
</comment>
<comment type="similarity">
    <text evidence="4">Belongs to the G-protein coupled receptor 1 family.</text>
</comment>
<dbReference type="EMBL" id="X59249">
    <property type="protein sequence ID" value="CAA41937.1"/>
    <property type="molecule type" value="mRNA"/>
</dbReference>
<dbReference type="EMBL" id="M94152">
    <property type="protein sequence ID" value="AAA40680.1"/>
    <property type="molecule type" value="mRNA"/>
</dbReference>
<dbReference type="EMBL" id="X93219">
    <property type="protein sequence ID" value="CAA63702.1"/>
    <property type="molecule type" value="mRNA"/>
</dbReference>
<dbReference type="PIR" id="A46152">
    <property type="entry name" value="A46152"/>
</dbReference>
<dbReference type="PIR" id="S17177">
    <property type="entry name" value="S17177"/>
</dbReference>
<dbReference type="PIR" id="S68678">
    <property type="entry name" value="S68678"/>
</dbReference>
<dbReference type="RefSeq" id="NP_001289679.1">
    <molecule id="P28647-2"/>
    <property type="nucleotide sequence ID" value="NM_001302750.1"/>
</dbReference>
<dbReference type="RefSeq" id="NP_001289680.1">
    <molecule id="P28647-1"/>
    <property type="nucleotide sequence ID" value="NM_001302751.1"/>
</dbReference>
<dbReference type="RefSeq" id="NP_001289684.1">
    <property type="nucleotide sequence ID" value="NM_001302755.1"/>
</dbReference>
<dbReference type="RefSeq" id="NP_037028.2">
    <property type="nucleotide sequence ID" value="NM_012896.3"/>
</dbReference>
<dbReference type="SMR" id="P28647"/>
<dbReference type="DIP" id="DIP-217N"/>
<dbReference type="FunCoup" id="P28647">
    <property type="interactions" value="18"/>
</dbReference>
<dbReference type="STRING" id="10116.ENSRNOP00000021236"/>
<dbReference type="BindingDB" id="P28647"/>
<dbReference type="ChEMBL" id="CHEMBL3360"/>
<dbReference type="DrugCentral" id="P28647"/>
<dbReference type="GuidetoPHARMACOLOGY" id="21"/>
<dbReference type="GlyCosmos" id="P28647">
    <property type="glycosylation" value="2 sites, No reported glycans"/>
</dbReference>
<dbReference type="GlyGen" id="P28647">
    <property type="glycosylation" value="2 sites"/>
</dbReference>
<dbReference type="iPTMnet" id="P28647"/>
<dbReference type="PhosphoSitePlus" id="P28647"/>
<dbReference type="PaxDb" id="10116-ENSRNOP00000021236"/>
<dbReference type="Ensembl" id="ENSRNOT00000021236.4">
    <molecule id="P28647-2"/>
    <property type="protein sequence ID" value="ENSRNOP00000021236.3"/>
    <property type="gene ID" value="ENSRNOG00000015788.6"/>
</dbReference>
<dbReference type="GeneID" id="100911796"/>
<dbReference type="KEGG" id="rno:100911796"/>
<dbReference type="UCSC" id="RGD:2051">
    <molecule id="P28647-1"/>
    <property type="organism name" value="rat"/>
</dbReference>
<dbReference type="AGR" id="RGD:2051"/>
<dbReference type="CTD" id="140"/>
<dbReference type="RGD" id="2051">
    <property type="gene designation" value="Adora3"/>
</dbReference>
<dbReference type="VEuPathDB" id="HostDB:ENSRNOG00000015788"/>
<dbReference type="eggNOG" id="KOG3656">
    <property type="taxonomic scope" value="Eukaryota"/>
</dbReference>
<dbReference type="GeneTree" id="ENSGT01030000234555"/>
<dbReference type="HOGENOM" id="CLU_009579_11_5_1"/>
<dbReference type="InParanoid" id="P28647"/>
<dbReference type="OMA" id="INCITYF"/>
<dbReference type="OrthoDB" id="41948at9989"/>
<dbReference type="PhylomeDB" id="P28647"/>
<dbReference type="TreeFam" id="TF325296"/>
<dbReference type="Reactome" id="R-RNO-417973">
    <property type="pathway name" value="Adenosine P1 receptors"/>
</dbReference>
<dbReference type="Reactome" id="R-RNO-418594">
    <property type="pathway name" value="G alpha (i) signalling events"/>
</dbReference>
<dbReference type="PRO" id="PR:P28647"/>
<dbReference type="Proteomes" id="UP000002494">
    <property type="component" value="Chromosome 2"/>
</dbReference>
<dbReference type="Bgee" id="ENSRNOG00000015788">
    <property type="expression patterns" value="Expressed in testis and 10 other cell types or tissues"/>
</dbReference>
<dbReference type="GO" id="GO:0030425">
    <property type="term" value="C:dendrite"/>
    <property type="evidence" value="ECO:0000318"/>
    <property type="project" value="GO_Central"/>
</dbReference>
<dbReference type="GO" id="GO:0031594">
    <property type="term" value="C:neuromuscular junction"/>
    <property type="evidence" value="ECO:0000266"/>
    <property type="project" value="RGD"/>
</dbReference>
<dbReference type="GO" id="GO:0005886">
    <property type="term" value="C:plasma membrane"/>
    <property type="evidence" value="ECO:0000266"/>
    <property type="project" value="RGD"/>
</dbReference>
<dbReference type="GO" id="GO:0042734">
    <property type="term" value="C:presynaptic membrane"/>
    <property type="evidence" value="ECO:0000314"/>
    <property type="project" value="RGD"/>
</dbReference>
<dbReference type="GO" id="GO:0098685">
    <property type="term" value="C:Schaffer collateral - CA1 synapse"/>
    <property type="evidence" value="ECO:0000314"/>
    <property type="project" value="SynGO"/>
</dbReference>
<dbReference type="GO" id="GO:0045202">
    <property type="term" value="C:synapse"/>
    <property type="evidence" value="ECO:0000266"/>
    <property type="project" value="RGD"/>
</dbReference>
<dbReference type="GO" id="GO:0001609">
    <property type="term" value="F:G protein-coupled adenosine receptor activity"/>
    <property type="evidence" value="ECO:0000314"/>
    <property type="project" value="RGD"/>
</dbReference>
<dbReference type="GO" id="GO:0019722">
    <property type="term" value="P:calcium-mediated signaling"/>
    <property type="evidence" value="ECO:0000266"/>
    <property type="project" value="RGD"/>
</dbReference>
<dbReference type="GO" id="GO:0001973">
    <property type="term" value="P:G protein-coupled adenosine receptor signaling pathway"/>
    <property type="evidence" value="ECO:0000266"/>
    <property type="project" value="RGD"/>
</dbReference>
<dbReference type="GO" id="GO:0007186">
    <property type="term" value="P:G protein-coupled receptor signaling pathway"/>
    <property type="evidence" value="ECO:0000314"/>
    <property type="project" value="RGD"/>
</dbReference>
<dbReference type="GO" id="GO:0002553">
    <property type="term" value="P:histamine secretion by mast cell"/>
    <property type="evidence" value="ECO:0000266"/>
    <property type="project" value="RGD"/>
</dbReference>
<dbReference type="GO" id="GO:0043303">
    <property type="term" value="P:mast cell degranulation"/>
    <property type="evidence" value="ECO:0000266"/>
    <property type="project" value="RGD"/>
</dbReference>
<dbReference type="GO" id="GO:0070254">
    <property type="term" value="P:mucus secretion"/>
    <property type="evidence" value="ECO:0000266"/>
    <property type="project" value="RGD"/>
</dbReference>
<dbReference type="GO" id="GO:0030336">
    <property type="term" value="P:negative regulation of cell migration"/>
    <property type="evidence" value="ECO:0000266"/>
    <property type="project" value="RGD"/>
</dbReference>
<dbReference type="GO" id="GO:0008285">
    <property type="term" value="P:negative regulation of cell population proliferation"/>
    <property type="evidence" value="ECO:0000266"/>
    <property type="project" value="RGD"/>
</dbReference>
<dbReference type="GO" id="GO:0043491">
    <property type="term" value="P:phosphatidylinositol 3-kinase/protein kinase B signal transduction"/>
    <property type="evidence" value="ECO:0000266"/>
    <property type="project" value="RGD"/>
</dbReference>
<dbReference type="GO" id="GO:0050850">
    <property type="term" value="P:positive regulation of calcium-mediated signaling"/>
    <property type="evidence" value="ECO:0000266"/>
    <property type="project" value="RGD"/>
</dbReference>
<dbReference type="GO" id="GO:0050729">
    <property type="term" value="P:positive regulation of inflammatory response"/>
    <property type="evidence" value="ECO:0000266"/>
    <property type="project" value="RGD"/>
</dbReference>
<dbReference type="GO" id="GO:0002687">
    <property type="term" value="P:positive regulation of leukocyte migration"/>
    <property type="evidence" value="ECO:0000266"/>
    <property type="project" value="RGD"/>
</dbReference>
<dbReference type="GO" id="GO:0043306">
    <property type="term" value="P:positive regulation of mast cell degranulation"/>
    <property type="evidence" value="ECO:0000266"/>
    <property type="project" value="RGD"/>
</dbReference>
<dbReference type="GO" id="GO:0070257">
    <property type="term" value="P:positive regulation of mucus secretion"/>
    <property type="evidence" value="ECO:0000266"/>
    <property type="project" value="RGD"/>
</dbReference>
<dbReference type="GO" id="GO:0051897">
    <property type="term" value="P:positive regulation of phosphatidylinositol 3-kinase/protein kinase B signal transduction"/>
    <property type="evidence" value="ECO:0000266"/>
    <property type="project" value="RGD"/>
</dbReference>
<dbReference type="GO" id="GO:0099171">
    <property type="term" value="P:presynaptic modulation of chemical synaptic transmission"/>
    <property type="evidence" value="ECO:0000314"/>
    <property type="project" value="SynGO"/>
</dbReference>
<dbReference type="GO" id="GO:0014061">
    <property type="term" value="P:regulation of norepinephrine secretion"/>
    <property type="evidence" value="ECO:0000315"/>
    <property type="project" value="RGD"/>
</dbReference>
<dbReference type="CDD" id="cd15070">
    <property type="entry name" value="7tmA_Adenosine_R_A3"/>
    <property type="match status" value="1"/>
</dbReference>
<dbReference type="FunFam" id="1.20.1070.10:FF:000061">
    <property type="entry name" value="Adenosine receptor A2"/>
    <property type="match status" value="1"/>
</dbReference>
<dbReference type="Gene3D" id="1.20.1070.10">
    <property type="entry name" value="Rhodopsin 7-helix transmembrane proteins"/>
    <property type="match status" value="1"/>
</dbReference>
<dbReference type="InterPro" id="IPR000466">
    <property type="entry name" value="Adeno_A3_rcpt"/>
</dbReference>
<dbReference type="InterPro" id="IPR001634">
    <property type="entry name" value="Adenosn_rcpt"/>
</dbReference>
<dbReference type="InterPro" id="IPR000276">
    <property type="entry name" value="GPCR_Rhodpsn"/>
</dbReference>
<dbReference type="InterPro" id="IPR017452">
    <property type="entry name" value="GPCR_Rhodpsn_7TM"/>
</dbReference>
<dbReference type="PANTHER" id="PTHR24246:SF2">
    <property type="entry name" value="ADENOSINE RECEPTOR A3"/>
    <property type="match status" value="1"/>
</dbReference>
<dbReference type="PANTHER" id="PTHR24246">
    <property type="entry name" value="OLFACTORY RECEPTOR AND ADENOSINE RECEPTOR"/>
    <property type="match status" value="1"/>
</dbReference>
<dbReference type="Pfam" id="PF00001">
    <property type="entry name" value="7tm_1"/>
    <property type="match status" value="1"/>
</dbReference>
<dbReference type="PRINTS" id="PR00555">
    <property type="entry name" value="ADENOSINEA3R"/>
</dbReference>
<dbReference type="PRINTS" id="PR00424">
    <property type="entry name" value="ADENOSINER"/>
</dbReference>
<dbReference type="PRINTS" id="PR00237">
    <property type="entry name" value="GPCRRHODOPSN"/>
</dbReference>
<dbReference type="SMART" id="SM01381">
    <property type="entry name" value="7TM_GPCR_Srsx"/>
    <property type="match status" value="1"/>
</dbReference>
<dbReference type="SUPFAM" id="SSF81321">
    <property type="entry name" value="Family A G protein-coupled receptor-like"/>
    <property type="match status" value="1"/>
</dbReference>
<dbReference type="PROSITE" id="PS00237">
    <property type="entry name" value="G_PROTEIN_RECEP_F1_1"/>
    <property type="match status" value="1"/>
</dbReference>
<dbReference type="PROSITE" id="PS50262">
    <property type="entry name" value="G_PROTEIN_RECEP_F1_2"/>
    <property type="match status" value="1"/>
</dbReference>
<evidence type="ECO:0000250" key="1"/>
<evidence type="ECO:0000250" key="2">
    <source>
        <dbReference type="UniProtKB" id="Q28309"/>
    </source>
</evidence>
<evidence type="ECO:0000255" key="3"/>
<evidence type="ECO:0000255" key="4">
    <source>
        <dbReference type="PROSITE-ProRule" id="PRU00521"/>
    </source>
</evidence>
<evidence type="ECO:0000269" key="5">
    <source>
    </source>
</evidence>
<evidence type="ECO:0000269" key="6">
    <source>
    </source>
</evidence>
<evidence type="ECO:0000269" key="7">
    <source>
    </source>
</evidence>
<evidence type="ECO:0000303" key="8">
    <source>
    </source>
</evidence>
<evidence type="ECO:0000303" key="9">
    <source>
    </source>
</evidence>
<evidence type="ECO:0000305" key="10"/>
<evidence type="ECO:0000305" key="11">
    <source>
    </source>
</evidence>
<reference key="1">
    <citation type="journal article" date="1992" name="Proc. Natl. Acad. Sci. U.S.A.">
        <title>Molecular cloning and characterization of an adenosine receptor: the A3 adenosine receptor.</title>
        <authorList>
            <person name="Zhou Q.Y."/>
            <person name="Li C.Y."/>
            <person name="Olah M.E."/>
            <person name="Johnson R.A."/>
            <person name="Stiles G.L."/>
            <person name="Civelli O."/>
        </authorList>
    </citation>
    <scope>NUCLEOTIDE SEQUENCE [MRNA] (ISOFORM A)</scope>
    <scope>FUNCTION</scope>
    <source>
        <tissue>Brain</tissue>
    </source>
</reference>
<reference key="2">
    <citation type="journal article" date="1991" name="FEBS Lett.">
        <title>Molecular cloning of a novel putative G-protein coupled receptor expressed during rat spermiogenesis.</title>
        <authorList>
            <person name="Meyerhof W."/>
            <person name="Mueller-Brechlin R."/>
            <person name="Richter D."/>
        </authorList>
    </citation>
    <scope>NUCLEOTIDE SEQUENCE [MRNA] (ISOFORM A)</scope>
    <scope>FUNCTION</scope>
    <scope>TISSUE SPECIFICITY</scope>
    <scope>DEVELOPMENTAL STAGE</scope>
    <source>
        <strain>Wistar</strain>
        <tissue>Testis</tissue>
    </source>
</reference>
<reference key="3">
    <citation type="journal article" date="1996" name="FEBS Lett.">
        <title>cDNA cloning and characterization of A3i, an alternatively spliced rat A3 adenosine receptor variant.</title>
        <authorList>
            <person name="Sajjadi F.G."/>
            <person name="Boyle D.L."/>
            <person name="Domingo R.C."/>
            <person name="Firestein G.S."/>
        </authorList>
    </citation>
    <scope>NUCLEOTIDE SEQUENCE [MRNA] (ISOFORM B)</scope>
    <source>
        <tissue>Brain</tissue>
    </source>
</reference>
<reference key="4">
    <citation type="journal article" date="2000" name="Mol. Pharmacol.">
        <title>Identification of threonine residues controlling the agonist-dependent phosphorylation and desensitization of the rat A(3) adenosine receptor.</title>
        <authorList>
            <person name="Palmer T.M."/>
            <person name="Stiles G.L."/>
        </authorList>
    </citation>
    <scope>PHOSPHORYLATION AT THR-307; THR-318 AND THR-319</scope>
    <scope>MUTAGENESIS OF 302-CYS--CYS-305; THR-307; THR-318 AND THR-319</scope>
</reference>
<organism>
    <name type="scientific">Rattus norvegicus</name>
    <name type="common">Rat</name>
    <dbReference type="NCBI Taxonomy" id="10116"/>
    <lineage>
        <taxon>Eukaryota</taxon>
        <taxon>Metazoa</taxon>
        <taxon>Chordata</taxon>
        <taxon>Craniata</taxon>
        <taxon>Vertebrata</taxon>
        <taxon>Euteleostomi</taxon>
        <taxon>Mammalia</taxon>
        <taxon>Eutheria</taxon>
        <taxon>Euarchontoglires</taxon>
        <taxon>Glires</taxon>
        <taxon>Rodentia</taxon>
        <taxon>Myomorpha</taxon>
        <taxon>Muroidea</taxon>
        <taxon>Muridae</taxon>
        <taxon>Murinae</taxon>
        <taxon>Rattus</taxon>
    </lineage>
</organism>
<feature type="chain" id="PRO_0000069013" description="Adenosine receptor A3">
    <location>
        <begin position="1"/>
        <end position="320"/>
    </location>
</feature>
<feature type="topological domain" description="Extracellular" evidence="1">
    <location>
        <begin position="1"/>
        <end position="16"/>
    </location>
</feature>
<feature type="transmembrane region" description="Helical; Name=1" evidence="1">
    <location>
        <begin position="17"/>
        <end position="39"/>
    </location>
</feature>
<feature type="topological domain" description="Cytoplasmic" evidence="1">
    <location>
        <begin position="40"/>
        <end position="50"/>
    </location>
</feature>
<feature type="transmembrane region" description="Helical; Name=2" evidence="1">
    <location>
        <begin position="51"/>
        <end position="74"/>
    </location>
</feature>
<feature type="topological domain" description="Extracellular" evidence="1">
    <location>
        <begin position="75"/>
        <end position="86"/>
    </location>
</feature>
<feature type="transmembrane region" description="Helical; Name=3" evidence="1">
    <location>
        <begin position="87"/>
        <end position="108"/>
    </location>
</feature>
<feature type="topological domain" description="Cytoplasmic" evidence="1">
    <location>
        <begin position="109"/>
        <end position="128"/>
    </location>
</feature>
<feature type="transmembrane region" description="Helical; Name=4" evidence="1">
    <location>
        <begin position="129"/>
        <end position="150"/>
    </location>
</feature>
<feature type="topological domain" description="Extracellular" evidence="1">
    <location>
        <begin position="151"/>
        <end position="179"/>
    </location>
</feature>
<feature type="transmembrane region" description="Helical; Name=5" evidence="1">
    <location>
        <begin position="180"/>
        <end position="200"/>
    </location>
</feature>
<feature type="topological domain" description="Cytoplasmic" evidence="1">
    <location>
        <begin position="201"/>
        <end position="233"/>
    </location>
</feature>
<feature type="transmembrane region" description="Helical; Name=6" evidence="1">
    <location>
        <begin position="234"/>
        <end position="257"/>
    </location>
</feature>
<feature type="topological domain" description="Extracellular" evidence="1">
    <location>
        <begin position="258"/>
        <end position="263"/>
    </location>
</feature>
<feature type="transmembrane region" description="Helical; Name=7" evidence="1">
    <location>
        <begin position="264"/>
        <end position="286"/>
    </location>
</feature>
<feature type="topological domain" description="Cytoplasmic" evidence="1">
    <location>
        <begin position="287"/>
        <end position="320"/>
    </location>
</feature>
<feature type="modified residue" description="Phosphothreonine" evidence="11">
    <location>
        <position position="307"/>
    </location>
</feature>
<feature type="modified residue" description="Phosphothreonine" evidence="11">
    <location>
        <position position="318"/>
    </location>
</feature>
<feature type="modified residue" description="Phosphothreonine" evidence="11">
    <location>
        <position position="319"/>
    </location>
</feature>
<feature type="lipid moiety-binding region" description="S-palmitoyl cysteine" evidence="3">
    <location>
        <position position="305"/>
    </location>
</feature>
<feature type="glycosylation site" description="N-linked (GlcNAc...) asparagine" evidence="3">
    <location>
        <position position="4"/>
    </location>
</feature>
<feature type="glycosylation site" description="N-linked (GlcNAc...) asparagine" evidence="3">
    <location>
        <position position="5"/>
    </location>
</feature>
<feature type="disulfide bond" evidence="4">
    <location>
        <begin position="85"/>
        <end position="168"/>
    </location>
</feature>
<feature type="splice variant" id="VSP_001859" description="In isoform B." evidence="9">
    <original>R</original>
    <variation>RLSFLVVNLPFSSPHSNR</variation>
    <location>
        <position position="119"/>
    </location>
</feature>
<feature type="mutagenesis site" description="Promotes agonist-independent phosphorylation." evidence="5">
    <original>CRLC</original>
    <variation>ARLA</variation>
    <location>
        <begin position="302"/>
        <end position="305"/>
    </location>
</feature>
<feature type="mutagenesis site" description="Small decrease in agonist-stimulated phosphorylation." evidence="5">
    <original>T</original>
    <variation>A</variation>
    <location>
        <position position="307"/>
    </location>
</feature>
<feature type="mutagenesis site" description="Strong decrease in agonist-stimulated phosphorylation." evidence="5">
    <original>T</original>
    <variation>A</variation>
    <variation>E</variation>
    <location>
        <position position="318"/>
    </location>
</feature>
<feature type="mutagenesis site" description="50% decrease in agonist-stimulated phosphorylation." evidence="5">
    <original>T</original>
    <variation>A</variation>
    <location>
        <position position="319"/>
    </location>
</feature>
<feature type="sequence conflict" description="In Ref. 1; AAA40680." evidence="10" ref="1">
    <original>I</original>
    <variation>V</variation>
    <location>
        <position position="18"/>
    </location>
</feature>
<feature type="sequence conflict" description="In Ref. 3; CAA63702." evidence="10" ref="3">
    <original>I</original>
    <variation>V</variation>
    <location>
        <position position="68"/>
    </location>
</feature>
<feature type="sequence conflict" description="In Ref. 2; CAA41937." evidence="10" ref="2">
    <original>VSLEVQMHFY</original>
    <variation>SAWRSRCTSM</variation>
    <location>
        <begin position="74"/>
        <end position="83"/>
    </location>
</feature>
<feature type="sequence conflict" description="In Ref. 3; CAA63702." evidence="10" ref="3">
    <original>F</original>
    <variation>L</variation>
    <location>
        <position position="132"/>
    </location>
</feature>
<feature type="sequence conflict" description="In Ref. 1; AAA40680." evidence="10" ref="1">
    <original>S</original>
    <variation>F</variation>
    <location>
        <position position="172"/>
    </location>
</feature>
<feature type="sequence conflict" description="In Ref. 1." evidence="10" ref="1">
    <original>I</original>
    <variation>N</variation>
    <location>
        <position position="288"/>
    </location>
</feature>
<feature type="sequence conflict" description="In Ref. 1." evidence="10" ref="1">
    <original>FKETY</original>
    <variation>VQRNH</variation>
    <location>
        <begin position="291"/>
        <end position="295"/>
    </location>
</feature>
<proteinExistence type="evidence at protein level"/>
<gene>
    <name type="primary">Adora3</name>
</gene>